<reference key="1">
    <citation type="journal article" date="1998" name="Genetics">
        <title>The complete nucleotide sequence of the mitochondrial DNA of the dogfish, Scyliorhinus canicula.</title>
        <authorList>
            <person name="Delarbre C."/>
            <person name="Spruyt N."/>
            <person name="Delmarre C."/>
            <person name="Gallut C."/>
            <person name="Barriel V."/>
            <person name="Janvier P."/>
            <person name="Laudet V."/>
            <person name="Gachelin G."/>
        </authorList>
    </citation>
    <scope>NUCLEOTIDE SEQUENCE [GENOMIC DNA]</scope>
    <source>
        <tissue>Muscle</tissue>
    </source>
</reference>
<gene>
    <name type="primary">MT-ND3</name>
    <name type="synonym">MTND3</name>
    <name type="synonym">NADH3</name>
    <name type="synonym">ND3</name>
</gene>
<organism>
    <name type="scientific">Scyliorhinus canicula</name>
    <name type="common">Small-spotted catshark</name>
    <name type="synonym">Squalus canicula</name>
    <dbReference type="NCBI Taxonomy" id="7830"/>
    <lineage>
        <taxon>Eukaryota</taxon>
        <taxon>Metazoa</taxon>
        <taxon>Chordata</taxon>
        <taxon>Craniata</taxon>
        <taxon>Vertebrata</taxon>
        <taxon>Chondrichthyes</taxon>
        <taxon>Elasmobranchii</taxon>
        <taxon>Galeomorphii</taxon>
        <taxon>Galeoidea</taxon>
        <taxon>Carcharhiniformes</taxon>
        <taxon>Scyliorhinidae</taxon>
        <taxon>Scyliorhinus</taxon>
    </lineage>
</organism>
<geneLocation type="mitochondrion"/>
<protein>
    <recommendedName>
        <fullName>NADH-ubiquinone oxidoreductase chain 3</fullName>
        <ecNumber>7.1.1.2</ecNumber>
    </recommendedName>
    <alternativeName>
        <fullName>NADH dehydrogenase subunit 3</fullName>
    </alternativeName>
</protein>
<feature type="chain" id="PRO_0000117830" description="NADH-ubiquinone oxidoreductase chain 3">
    <location>
        <begin position="1"/>
        <end position="116"/>
    </location>
</feature>
<feature type="transmembrane region" description="Helical" evidence="2">
    <location>
        <begin position="8"/>
        <end position="28"/>
    </location>
</feature>
<feature type="transmembrane region" description="Helical" evidence="2">
    <location>
        <begin position="56"/>
        <end position="76"/>
    </location>
</feature>
<feature type="transmembrane region" description="Helical" evidence="2">
    <location>
        <begin position="88"/>
        <end position="108"/>
    </location>
</feature>
<comment type="function">
    <text evidence="1">Core subunit of the mitochondrial membrane respiratory chain NADH dehydrogenase (Complex I) that is believed to belong to the minimal assembly required for catalysis. Complex I functions in the transfer of electrons from NADH to the respiratory chain. The immediate electron acceptor for the enzyme is believed to be ubiquinone (By similarity).</text>
</comment>
<comment type="catalytic activity">
    <reaction>
        <text>a ubiquinone + NADH + 5 H(+)(in) = a ubiquinol + NAD(+) + 4 H(+)(out)</text>
        <dbReference type="Rhea" id="RHEA:29091"/>
        <dbReference type="Rhea" id="RHEA-COMP:9565"/>
        <dbReference type="Rhea" id="RHEA-COMP:9566"/>
        <dbReference type="ChEBI" id="CHEBI:15378"/>
        <dbReference type="ChEBI" id="CHEBI:16389"/>
        <dbReference type="ChEBI" id="CHEBI:17976"/>
        <dbReference type="ChEBI" id="CHEBI:57540"/>
        <dbReference type="ChEBI" id="CHEBI:57945"/>
        <dbReference type="EC" id="7.1.1.2"/>
    </reaction>
</comment>
<comment type="subcellular location">
    <subcellularLocation>
        <location evidence="1">Mitochondrion membrane</location>
        <topology evidence="1">Multi-pass membrane protein</topology>
    </subcellularLocation>
</comment>
<comment type="similarity">
    <text evidence="3">Belongs to the complex I subunit 3 family.</text>
</comment>
<proteinExistence type="inferred from homology"/>
<keyword id="KW-0249">Electron transport</keyword>
<keyword id="KW-0472">Membrane</keyword>
<keyword id="KW-0496">Mitochondrion</keyword>
<keyword id="KW-0520">NAD</keyword>
<keyword id="KW-0679">Respiratory chain</keyword>
<keyword id="KW-1278">Translocase</keyword>
<keyword id="KW-0812">Transmembrane</keyword>
<keyword id="KW-1133">Transmembrane helix</keyword>
<keyword id="KW-0813">Transport</keyword>
<keyword id="KW-0830">Ubiquinone</keyword>
<dbReference type="EC" id="7.1.1.2"/>
<dbReference type="EMBL" id="Y16067">
    <property type="protein sequence ID" value="CAA76026.1"/>
    <property type="molecule type" value="Genomic_DNA"/>
</dbReference>
<dbReference type="PIR" id="T11307">
    <property type="entry name" value="T11307"/>
</dbReference>
<dbReference type="RefSeq" id="NP_007621.1">
    <property type="nucleotide sequence ID" value="NC_001950.1"/>
</dbReference>
<dbReference type="SMR" id="O79408"/>
<dbReference type="GeneID" id="808301"/>
<dbReference type="CTD" id="4537"/>
<dbReference type="OrthoDB" id="154075at2759"/>
<dbReference type="GO" id="GO:0031966">
    <property type="term" value="C:mitochondrial membrane"/>
    <property type="evidence" value="ECO:0007669"/>
    <property type="project" value="UniProtKB-SubCell"/>
</dbReference>
<dbReference type="GO" id="GO:0030964">
    <property type="term" value="C:NADH dehydrogenase complex"/>
    <property type="evidence" value="ECO:0007669"/>
    <property type="project" value="TreeGrafter"/>
</dbReference>
<dbReference type="GO" id="GO:0008137">
    <property type="term" value="F:NADH dehydrogenase (ubiquinone) activity"/>
    <property type="evidence" value="ECO:0007669"/>
    <property type="project" value="UniProtKB-EC"/>
</dbReference>
<dbReference type="FunFam" id="1.20.58.1610:FF:000004">
    <property type="entry name" value="NADH-quinone oxidoreductase subunit A"/>
    <property type="match status" value="1"/>
</dbReference>
<dbReference type="Gene3D" id="1.20.58.1610">
    <property type="entry name" value="NADH:ubiquinone/plastoquinone oxidoreductase, chain 3"/>
    <property type="match status" value="1"/>
</dbReference>
<dbReference type="InterPro" id="IPR000440">
    <property type="entry name" value="NADH_UbQ/plastoQ_OxRdtase_su3"/>
</dbReference>
<dbReference type="InterPro" id="IPR038430">
    <property type="entry name" value="NDAH_ubi_oxred_su3_sf"/>
</dbReference>
<dbReference type="PANTHER" id="PTHR11058">
    <property type="entry name" value="NADH-UBIQUINONE OXIDOREDUCTASE CHAIN 3"/>
    <property type="match status" value="1"/>
</dbReference>
<dbReference type="PANTHER" id="PTHR11058:SF9">
    <property type="entry name" value="NADH-UBIQUINONE OXIDOREDUCTASE CHAIN 3"/>
    <property type="match status" value="1"/>
</dbReference>
<dbReference type="Pfam" id="PF00507">
    <property type="entry name" value="Oxidored_q4"/>
    <property type="match status" value="1"/>
</dbReference>
<accession>O79408</accession>
<sequence>MSLIMSSVVATALVSLILAFIAFWLPSLKPDNEKLSPYECGFDPLGSARLPFSMRFFLIAILFLLFDLEIALLLPLPWGNQLFSPFSTLLWTTTILVLLTLGLIYEWFQGGLEWAE</sequence>
<evidence type="ECO:0000250" key="1"/>
<evidence type="ECO:0000255" key="2"/>
<evidence type="ECO:0000305" key="3"/>
<name>NU3M_SCYCA</name>